<gene>
    <name type="primary">SLC47A1</name>
    <name type="synonym">MATE1</name>
</gene>
<proteinExistence type="evidence at transcript level"/>
<sequence>MEAPVELGPGGRQASPERRHWLRCLVLSDFREELRALLVLACPAFLAQLMVFLISFVSSVFCGHLSKLELNAVTLAIAVINVMGVSVGFGLSSACDTLISQTYGSRNLKHVGVILQRGSLILLLCCLPCWALFLNTQHILLLFRQDPAVSRLTQTYVTIFIPALPATFLYTLQVKYLLNQGIVLPQVVTGVAANLVNALANYLFVYQLHLGVMGSALANTVAQFTLALLLFLYILRSKVYQATWGGWSLECLQDWASFFRLAIPSMLMLCMEWWAYEIGSFLSGILGMVELGAQSVTYELAVIVYMIPMGLSVAVNVRVGNALGAGNIEQAKKSSAVALLVTELIAVVFCVMLLSCKDLVGYIFTSDRDIIALVAQVTPIYAVSHLFESLAGTSGGILRGSGNQKFGAIVNAIGYYVVGLPIGIALMFAAKLGVIGLWLGIVVCAVSQAVCFLGFIARLNWTKACQQARVHANLTVNTASNGNSAVLPDQPHPVGPDSHGGIVLRDADRKEGAELNEQVHPELPLPVRPEDSAHLSGKQLALRRGLLLLGVILVLLAGILVKVYVRTQ</sequence>
<keyword id="KW-0007">Acetylation</keyword>
<keyword id="KW-0050">Antiport</keyword>
<keyword id="KW-1003">Cell membrane</keyword>
<keyword id="KW-0472">Membrane</keyword>
<keyword id="KW-1185">Reference proteome</keyword>
<keyword id="KW-0812">Transmembrane</keyword>
<keyword id="KW-1133">Transmembrane helix</keyword>
<keyword id="KW-0813">Transport</keyword>
<comment type="function">
    <text evidence="1 3">Multidrug efflux pump that functions as a H(+)/organic cation antiporter (PubMed:17442726). Plays a physiological role in the excretion of cationic compounds including endogenous metabolites, drugs, toxins through the kidney and liver, into urine and bile respectively. Mediates the efflux of endogenous compounds such as creatinine, vitamin B1/thiamine, agmatine and estrone-3-sulfate. May also contribute to regulate the transport of cationic compounds in testis across the blood-testis-barrier (By similarity).</text>
</comment>
<comment type="catalytic activity">
    <reaction evidence="1">
        <text>thiamine(out) + H(+)(in) = thiamine(in) + H(+)(out)</text>
        <dbReference type="Rhea" id="RHEA:71271"/>
        <dbReference type="ChEBI" id="CHEBI:15378"/>
        <dbReference type="ChEBI" id="CHEBI:18385"/>
    </reaction>
</comment>
<comment type="catalytic activity">
    <reaction evidence="1">
        <text>estrone 3-sulfate(in) + H(+)(out) = estrone 3-sulfate(out) + H(+)(in)</text>
        <dbReference type="Rhea" id="RHEA:72139"/>
        <dbReference type="ChEBI" id="CHEBI:15378"/>
        <dbReference type="ChEBI" id="CHEBI:60050"/>
    </reaction>
</comment>
<comment type="catalytic activity">
    <reaction evidence="1">
        <text>creatinine(in) + H(+)(out) = creatinine(out) + H(+)(in)</text>
        <dbReference type="Rhea" id="RHEA:72183"/>
        <dbReference type="ChEBI" id="CHEBI:15378"/>
        <dbReference type="ChEBI" id="CHEBI:16737"/>
    </reaction>
</comment>
<comment type="catalytic activity">
    <reaction evidence="1">
        <text>agmatine(in) + H(+)(out) = agmatine(out) + H(+)(in)</text>
        <dbReference type="Rhea" id="RHEA:72127"/>
        <dbReference type="ChEBI" id="CHEBI:15378"/>
        <dbReference type="ChEBI" id="CHEBI:58145"/>
    </reaction>
    <physiologicalReaction direction="left-to-right" evidence="1">
        <dbReference type="Rhea" id="RHEA:72128"/>
    </physiologicalReaction>
    <physiologicalReaction direction="right-to-left" evidence="1">
        <dbReference type="Rhea" id="RHEA:72129"/>
    </physiologicalReaction>
</comment>
<comment type="subcellular location">
    <subcellularLocation>
        <location evidence="3">Cell membrane</location>
        <topology evidence="2">Multi-pass membrane protein</topology>
    </subcellularLocation>
    <subcellularLocation>
        <location evidence="1">Apical cell membrane</location>
        <topology evidence="2">Multi-pass membrane protein</topology>
    </subcellularLocation>
    <text evidence="1">Localizes to the plasma membrane; at the brush border membranes of the proximal tubules (kidney) and at the bile caniculi (liver).</text>
</comment>
<comment type="tissue specificity">
    <text evidence="3">Predominantly expressed in kidney and liver.</text>
</comment>
<comment type="miscellaneous">
    <text evidence="1">Mediates the efflux of cationic compounds such as the model cations, tetraethylammonium (TEA), the neurotoxin 1-methyl-4-phenylpyridinium (MPP), the platinum-based drugs cisplatin and oxaliplatin, the drugs procainamide, acyclovir and topotecan, or weak bases that are positively charged at physiological pH, such as cimetidine or the antidiabetic drug metformin.</text>
</comment>
<comment type="similarity">
    <text evidence="4">Belongs to the multi antimicrobial extrusion (MATE) (TC 2.A.66.1) family.</text>
</comment>
<protein>
    <recommendedName>
        <fullName>Multidrug and toxin extrusion protein 1</fullName>
        <shortName>MATE-1</shortName>
    </recommendedName>
    <alternativeName>
        <fullName>Solute carrier family 47 member 1</fullName>
    </alternativeName>
</protein>
<dbReference type="EMBL" id="EF120627">
    <property type="protein sequence ID" value="ABO33757.1"/>
    <property type="molecule type" value="mRNA"/>
</dbReference>
<dbReference type="RefSeq" id="NP_001103289.1">
    <property type="nucleotide sequence ID" value="NM_001109819.1"/>
</dbReference>
<dbReference type="SMR" id="A7KAU2"/>
<dbReference type="FunCoup" id="A7KAU2">
    <property type="interactions" value="50"/>
</dbReference>
<dbReference type="STRING" id="9986.ENSOCUP00000037174"/>
<dbReference type="Ensembl" id="ENSOCUT00000061436.1">
    <property type="protein sequence ID" value="ENSOCUP00000049141.1"/>
    <property type="gene ID" value="ENSOCUG00000030971.1"/>
</dbReference>
<dbReference type="GeneID" id="100125995"/>
<dbReference type="KEGG" id="ocu:100125995"/>
<dbReference type="CTD" id="55244"/>
<dbReference type="GeneTree" id="ENSGT00940000161644"/>
<dbReference type="InParanoid" id="A7KAU2"/>
<dbReference type="OrthoDB" id="2126698at2759"/>
<dbReference type="Proteomes" id="UP000001811">
    <property type="component" value="Unplaced"/>
</dbReference>
<dbReference type="Bgee" id="ENSOCUG00000030971">
    <property type="expression patterns" value="Expressed in aorta and 8 other cell types or tissues"/>
</dbReference>
<dbReference type="GO" id="GO:0016324">
    <property type="term" value="C:apical plasma membrane"/>
    <property type="evidence" value="ECO:0007669"/>
    <property type="project" value="UniProtKB-SubCell"/>
</dbReference>
<dbReference type="GO" id="GO:0005886">
    <property type="term" value="C:plasma membrane"/>
    <property type="evidence" value="ECO:0000314"/>
    <property type="project" value="UniProtKB"/>
</dbReference>
<dbReference type="GO" id="GO:0015297">
    <property type="term" value="F:antiporter activity"/>
    <property type="evidence" value="ECO:0000314"/>
    <property type="project" value="UniProtKB"/>
</dbReference>
<dbReference type="GO" id="GO:0015101">
    <property type="term" value="F:organic cation transmembrane transporter activity"/>
    <property type="evidence" value="ECO:0000314"/>
    <property type="project" value="UniProtKB"/>
</dbReference>
<dbReference type="GO" id="GO:0140968">
    <property type="term" value="F:polyspecific organic cation:proton antiporter activity"/>
    <property type="evidence" value="ECO:0000314"/>
    <property type="project" value="UniProtKB"/>
</dbReference>
<dbReference type="GO" id="GO:0015489">
    <property type="term" value="F:putrescine transmembrane transporter activity"/>
    <property type="evidence" value="ECO:0000250"/>
    <property type="project" value="UniProtKB"/>
</dbReference>
<dbReference type="GO" id="GO:0015234">
    <property type="term" value="F:thiamine transmembrane transporter activity"/>
    <property type="evidence" value="ECO:0000250"/>
    <property type="project" value="UniProtKB"/>
</dbReference>
<dbReference type="GO" id="GO:0042910">
    <property type="term" value="F:xenobiotic transmembrane transporter activity"/>
    <property type="evidence" value="ECO:0007669"/>
    <property type="project" value="InterPro"/>
</dbReference>
<dbReference type="GO" id="GO:0015695">
    <property type="term" value="P:organic cation transport"/>
    <property type="evidence" value="ECO:0000314"/>
    <property type="project" value="UniProtKB"/>
</dbReference>
<dbReference type="GO" id="GO:0015847">
    <property type="term" value="P:putrescine transport"/>
    <property type="evidence" value="ECO:0000250"/>
    <property type="project" value="UniProtKB"/>
</dbReference>
<dbReference type="GO" id="GO:1990961">
    <property type="term" value="P:xenobiotic detoxification by transmembrane export across the plasma membrane"/>
    <property type="evidence" value="ECO:0007669"/>
    <property type="project" value="InterPro"/>
</dbReference>
<dbReference type="CDD" id="cd13132">
    <property type="entry name" value="MATE_eukaryotic"/>
    <property type="match status" value="1"/>
</dbReference>
<dbReference type="InterPro" id="IPR045069">
    <property type="entry name" value="MATE_euk"/>
</dbReference>
<dbReference type="InterPro" id="IPR002528">
    <property type="entry name" value="MATE_fam"/>
</dbReference>
<dbReference type="NCBIfam" id="TIGR00797">
    <property type="entry name" value="matE"/>
    <property type="match status" value="1"/>
</dbReference>
<dbReference type="PANTHER" id="PTHR11206">
    <property type="entry name" value="MULTIDRUG RESISTANCE PROTEIN"/>
    <property type="match status" value="1"/>
</dbReference>
<dbReference type="Pfam" id="PF01554">
    <property type="entry name" value="MatE"/>
    <property type="match status" value="2"/>
</dbReference>
<name>S47A1_RABIT</name>
<evidence type="ECO:0000250" key="1">
    <source>
        <dbReference type="UniProtKB" id="Q96FL8"/>
    </source>
</evidence>
<evidence type="ECO:0000255" key="2"/>
<evidence type="ECO:0000269" key="3">
    <source>
    </source>
</evidence>
<evidence type="ECO:0000305" key="4"/>
<reference key="1">
    <citation type="journal article" date="2007" name="Am. J. Physiol.">
        <title>Molecular identification and functional characterization of rabbit MATE1 and MATE2-K.</title>
        <authorList>
            <person name="Zhang X."/>
            <person name="Cherrington N.J."/>
            <person name="Wright S.H."/>
        </authorList>
    </citation>
    <scope>NUCLEOTIDE SEQUENCE [MRNA]</scope>
    <scope>TISSUE SPECIFICITY</scope>
    <scope>FUNCTION</scope>
    <scope>TRANSPORTER ACTIVITY</scope>
    <scope>SUBCELLULAR LOCATION</scope>
</reference>
<feature type="chain" id="PRO_0000312848" description="Multidrug and toxin extrusion protein 1">
    <location>
        <begin position="1"/>
        <end position="568"/>
    </location>
</feature>
<feature type="topological domain" description="Cytoplasmic" evidence="2">
    <location>
        <begin position="1"/>
        <end position="36"/>
    </location>
</feature>
<feature type="transmembrane region" description="Helical" evidence="2">
    <location>
        <begin position="37"/>
        <end position="57"/>
    </location>
</feature>
<feature type="topological domain" description="Extracellular" evidence="2">
    <location>
        <begin position="58"/>
        <end position="71"/>
    </location>
</feature>
<feature type="transmembrane region" description="Helical" evidence="2">
    <location>
        <begin position="72"/>
        <end position="92"/>
    </location>
</feature>
<feature type="topological domain" description="Cytoplasmic" evidence="2">
    <location>
        <begin position="93"/>
        <end position="119"/>
    </location>
</feature>
<feature type="transmembrane region" description="Helical" evidence="2">
    <location>
        <begin position="120"/>
        <end position="140"/>
    </location>
</feature>
<feature type="topological domain" description="Extracellular" evidence="2">
    <location>
        <begin position="141"/>
        <end position="151"/>
    </location>
</feature>
<feature type="transmembrane region" description="Helical" evidence="2">
    <location>
        <begin position="152"/>
        <end position="172"/>
    </location>
</feature>
<feature type="topological domain" description="Cytoplasmic" evidence="2">
    <location>
        <begin position="173"/>
        <end position="175"/>
    </location>
</feature>
<feature type="transmembrane region" description="Helical" evidence="2">
    <location>
        <begin position="176"/>
        <end position="196"/>
    </location>
</feature>
<feature type="topological domain" description="Extracellular" evidence="2">
    <location>
        <begin position="197"/>
        <end position="214"/>
    </location>
</feature>
<feature type="transmembrane region" description="Helical" evidence="2">
    <location>
        <begin position="215"/>
        <end position="235"/>
    </location>
</feature>
<feature type="topological domain" description="Cytoplasmic" evidence="2">
    <location>
        <begin position="236"/>
        <end position="255"/>
    </location>
</feature>
<feature type="transmembrane region" description="Helical" evidence="2">
    <location>
        <begin position="256"/>
        <end position="278"/>
    </location>
</feature>
<feature type="topological domain" description="Extracellular" evidence="2">
    <location>
        <begin position="279"/>
        <end position="294"/>
    </location>
</feature>
<feature type="transmembrane region" description="Helical" evidence="2">
    <location>
        <begin position="295"/>
        <end position="315"/>
    </location>
</feature>
<feature type="topological domain" description="Cytoplasmic" evidence="2">
    <location>
        <begin position="316"/>
        <end position="335"/>
    </location>
</feature>
<feature type="transmembrane region" description="Helical" evidence="2">
    <location>
        <begin position="336"/>
        <end position="356"/>
    </location>
</feature>
<feature type="topological domain" description="Extracellular" evidence="2">
    <location>
        <begin position="357"/>
        <end position="369"/>
    </location>
</feature>
<feature type="transmembrane region" description="Helical" evidence="2">
    <location>
        <begin position="370"/>
        <end position="390"/>
    </location>
</feature>
<feature type="topological domain" description="Cytoplasmic" evidence="2">
    <location>
        <begin position="391"/>
        <end position="407"/>
    </location>
</feature>
<feature type="transmembrane region" description="Helical" evidence="2">
    <location>
        <begin position="408"/>
        <end position="430"/>
    </location>
</feature>
<feature type="topological domain" description="Extracellular" evidence="2">
    <location>
        <begin position="431"/>
        <end position="433"/>
    </location>
</feature>
<feature type="transmembrane region" description="Helical" evidence="2">
    <location>
        <begin position="434"/>
        <end position="456"/>
    </location>
</feature>
<feature type="topological domain" description="Cytoplasmic" evidence="2">
    <location>
        <begin position="457"/>
        <end position="544"/>
    </location>
</feature>
<feature type="transmembrane region" description="Helical" evidence="2">
    <location>
        <begin position="545"/>
        <end position="565"/>
    </location>
</feature>
<feature type="topological domain" description="Extracellular" evidence="2">
    <location>
        <begin position="566"/>
        <end position="568"/>
    </location>
</feature>
<feature type="modified residue" description="N-acetylmethionine" evidence="1">
    <location>
        <position position="1"/>
    </location>
</feature>
<accession>A7KAU2</accession>
<organism>
    <name type="scientific">Oryctolagus cuniculus</name>
    <name type="common">Rabbit</name>
    <dbReference type="NCBI Taxonomy" id="9986"/>
    <lineage>
        <taxon>Eukaryota</taxon>
        <taxon>Metazoa</taxon>
        <taxon>Chordata</taxon>
        <taxon>Craniata</taxon>
        <taxon>Vertebrata</taxon>
        <taxon>Euteleostomi</taxon>
        <taxon>Mammalia</taxon>
        <taxon>Eutheria</taxon>
        <taxon>Euarchontoglires</taxon>
        <taxon>Glires</taxon>
        <taxon>Lagomorpha</taxon>
        <taxon>Leporidae</taxon>
        <taxon>Oryctolagus</taxon>
    </lineage>
</organism>